<sequence>MSKRIKCTLSYDGTHFFGYQIQPGKRTVQGELERVLEQMHKGKAIRVTASGRTDAGVHAYGQVIHFDTFLSLSPDQWKKALNAQLPDDIVIKDVQEADPSFHARFSAKAKEYRYKVRIAQERDVFLRNYCYHYPYPLDMEAMRHALRLIEGTHDFTSFCSAKTDVDDRVRTIYKADMAMHDDLLEFCFIGNGFLYNMVRIIVGTILEVGQGKRSIDSISHAFEAKDRQFAGKTAPPQGLYLWKVYYDN</sequence>
<name>TRUA_GEOSW</name>
<gene>
    <name evidence="1" type="primary">truA</name>
    <name type="ordered locus">GWCH70_0143</name>
</gene>
<protein>
    <recommendedName>
        <fullName evidence="1">tRNA pseudouridine synthase A</fullName>
        <ecNumber evidence="1">5.4.99.12</ecNumber>
    </recommendedName>
    <alternativeName>
        <fullName evidence="1">tRNA pseudouridine(38-40) synthase</fullName>
    </alternativeName>
    <alternativeName>
        <fullName evidence="1">tRNA pseudouridylate synthase I</fullName>
    </alternativeName>
    <alternativeName>
        <fullName evidence="1">tRNA-uridine isomerase I</fullName>
    </alternativeName>
</protein>
<evidence type="ECO:0000255" key="1">
    <source>
        <dbReference type="HAMAP-Rule" id="MF_00171"/>
    </source>
</evidence>
<organism>
    <name type="scientific">Geobacillus sp. (strain WCH70)</name>
    <dbReference type="NCBI Taxonomy" id="471223"/>
    <lineage>
        <taxon>Bacteria</taxon>
        <taxon>Bacillati</taxon>
        <taxon>Bacillota</taxon>
        <taxon>Bacilli</taxon>
        <taxon>Bacillales</taxon>
        <taxon>Anoxybacillaceae</taxon>
        <taxon>Geobacillus</taxon>
    </lineage>
</organism>
<keyword id="KW-0413">Isomerase</keyword>
<keyword id="KW-0819">tRNA processing</keyword>
<accession>C5D3U9</accession>
<dbReference type="EC" id="5.4.99.12" evidence="1"/>
<dbReference type="EMBL" id="CP001638">
    <property type="protein sequence ID" value="ACS23083.1"/>
    <property type="molecule type" value="Genomic_DNA"/>
</dbReference>
<dbReference type="SMR" id="C5D3U9"/>
<dbReference type="STRING" id="471223.GWCH70_0143"/>
<dbReference type="KEGG" id="gwc:GWCH70_0143"/>
<dbReference type="eggNOG" id="COG0101">
    <property type="taxonomic scope" value="Bacteria"/>
</dbReference>
<dbReference type="HOGENOM" id="CLU_014673_0_1_9"/>
<dbReference type="OrthoDB" id="9811823at2"/>
<dbReference type="GO" id="GO:0003723">
    <property type="term" value="F:RNA binding"/>
    <property type="evidence" value="ECO:0007669"/>
    <property type="project" value="InterPro"/>
</dbReference>
<dbReference type="GO" id="GO:0160147">
    <property type="term" value="F:tRNA pseudouridine(38-40) synthase activity"/>
    <property type="evidence" value="ECO:0007669"/>
    <property type="project" value="UniProtKB-EC"/>
</dbReference>
<dbReference type="GO" id="GO:0031119">
    <property type="term" value="P:tRNA pseudouridine synthesis"/>
    <property type="evidence" value="ECO:0007669"/>
    <property type="project" value="UniProtKB-UniRule"/>
</dbReference>
<dbReference type="CDD" id="cd02570">
    <property type="entry name" value="PseudoU_synth_EcTruA"/>
    <property type="match status" value="1"/>
</dbReference>
<dbReference type="FunFam" id="3.30.70.580:FF:000001">
    <property type="entry name" value="tRNA pseudouridine synthase A"/>
    <property type="match status" value="1"/>
</dbReference>
<dbReference type="Gene3D" id="3.30.70.660">
    <property type="entry name" value="Pseudouridine synthase I, catalytic domain, C-terminal subdomain"/>
    <property type="match status" value="1"/>
</dbReference>
<dbReference type="Gene3D" id="3.30.70.580">
    <property type="entry name" value="Pseudouridine synthase I, catalytic domain, N-terminal subdomain"/>
    <property type="match status" value="1"/>
</dbReference>
<dbReference type="HAMAP" id="MF_00171">
    <property type="entry name" value="TruA"/>
    <property type="match status" value="1"/>
</dbReference>
<dbReference type="InterPro" id="IPR020103">
    <property type="entry name" value="PsdUridine_synth_cat_dom_sf"/>
</dbReference>
<dbReference type="InterPro" id="IPR001406">
    <property type="entry name" value="PsdUridine_synth_TruA"/>
</dbReference>
<dbReference type="InterPro" id="IPR020097">
    <property type="entry name" value="PsdUridine_synth_TruA_a/b_dom"/>
</dbReference>
<dbReference type="InterPro" id="IPR020095">
    <property type="entry name" value="PsdUridine_synth_TruA_C"/>
</dbReference>
<dbReference type="InterPro" id="IPR020094">
    <property type="entry name" value="TruA/RsuA/RluB/E/F_N"/>
</dbReference>
<dbReference type="NCBIfam" id="TIGR00071">
    <property type="entry name" value="hisT_truA"/>
    <property type="match status" value="1"/>
</dbReference>
<dbReference type="PANTHER" id="PTHR11142">
    <property type="entry name" value="PSEUDOURIDYLATE SYNTHASE"/>
    <property type="match status" value="1"/>
</dbReference>
<dbReference type="PANTHER" id="PTHR11142:SF0">
    <property type="entry name" value="TRNA PSEUDOURIDINE SYNTHASE-LIKE 1"/>
    <property type="match status" value="1"/>
</dbReference>
<dbReference type="Pfam" id="PF01416">
    <property type="entry name" value="PseudoU_synth_1"/>
    <property type="match status" value="2"/>
</dbReference>
<dbReference type="PIRSF" id="PIRSF001430">
    <property type="entry name" value="tRNA_psdUrid_synth"/>
    <property type="match status" value="1"/>
</dbReference>
<dbReference type="SUPFAM" id="SSF55120">
    <property type="entry name" value="Pseudouridine synthase"/>
    <property type="match status" value="1"/>
</dbReference>
<proteinExistence type="inferred from homology"/>
<feature type="chain" id="PRO_1000203693" description="tRNA pseudouridine synthase A">
    <location>
        <begin position="1"/>
        <end position="248"/>
    </location>
</feature>
<feature type="active site" description="Nucleophile" evidence="1">
    <location>
        <position position="54"/>
    </location>
</feature>
<feature type="binding site" evidence="1">
    <location>
        <position position="112"/>
    </location>
    <ligand>
        <name>substrate</name>
    </ligand>
</feature>
<reference key="1">
    <citation type="submission" date="2009-06" db="EMBL/GenBank/DDBJ databases">
        <title>Complete sequence of chromosome of Geopacillus sp. WCH70.</title>
        <authorList>
            <consortium name="US DOE Joint Genome Institute"/>
            <person name="Lucas S."/>
            <person name="Copeland A."/>
            <person name="Lapidus A."/>
            <person name="Glavina del Rio T."/>
            <person name="Dalin E."/>
            <person name="Tice H."/>
            <person name="Bruce D."/>
            <person name="Goodwin L."/>
            <person name="Pitluck S."/>
            <person name="Chertkov O."/>
            <person name="Brettin T."/>
            <person name="Detter J.C."/>
            <person name="Han C."/>
            <person name="Larimer F."/>
            <person name="Land M."/>
            <person name="Hauser L."/>
            <person name="Kyrpides N."/>
            <person name="Mikhailova N."/>
            <person name="Brumm P."/>
            <person name="Mead D.A."/>
            <person name="Richardson P."/>
        </authorList>
    </citation>
    <scope>NUCLEOTIDE SEQUENCE [LARGE SCALE GENOMIC DNA]</scope>
    <source>
        <strain>WCH70</strain>
    </source>
</reference>
<comment type="function">
    <text evidence="1">Formation of pseudouridine at positions 38, 39 and 40 in the anticodon stem and loop of transfer RNAs.</text>
</comment>
<comment type="catalytic activity">
    <reaction evidence="1">
        <text>uridine(38/39/40) in tRNA = pseudouridine(38/39/40) in tRNA</text>
        <dbReference type="Rhea" id="RHEA:22376"/>
        <dbReference type="Rhea" id="RHEA-COMP:10085"/>
        <dbReference type="Rhea" id="RHEA-COMP:10087"/>
        <dbReference type="ChEBI" id="CHEBI:65314"/>
        <dbReference type="ChEBI" id="CHEBI:65315"/>
        <dbReference type="EC" id="5.4.99.12"/>
    </reaction>
</comment>
<comment type="subunit">
    <text evidence="1">Homodimer.</text>
</comment>
<comment type="similarity">
    <text evidence="1">Belongs to the tRNA pseudouridine synthase TruA family.</text>
</comment>